<reference key="1">
    <citation type="submission" date="2004-10" db="EMBL/GenBank/DDBJ databases">
        <authorList>
            <consortium name="NIH - Xenopus Gene Collection (XGC) project"/>
        </authorList>
    </citation>
    <scope>NUCLEOTIDE SEQUENCE [LARGE SCALE MRNA]</scope>
    <source>
        <tissue>Embryo</tissue>
    </source>
</reference>
<feature type="chain" id="PRO_0000225657" description="Bifunctional heparan sulfate N-deacetylase/N-sulfotransferase 1">
    <location>
        <begin position="1"/>
        <end position="878"/>
    </location>
</feature>
<feature type="topological domain" description="Cytoplasmic" evidence="4">
    <location>
        <begin position="1"/>
        <end position="17"/>
    </location>
</feature>
<feature type="transmembrane region" description="Helical; Signal-anchor for type II membrane protein" evidence="4">
    <location>
        <begin position="18"/>
        <end position="38"/>
    </location>
</feature>
<feature type="topological domain" description="Lumenal" evidence="4">
    <location>
        <begin position="39"/>
        <end position="878"/>
    </location>
</feature>
<feature type="region of interest" description="Sufficient for localization to Golgi membrane" evidence="1">
    <location>
        <begin position="1"/>
        <end position="169"/>
    </location>
</feature>
<feature type="region of interest" description="Heparan sulfate N-deacetylase 1">
    <location>
        <begin position="40"/>
        <end position="594"/>
    </location>
</feature>
<feature type="region of interest" description="Disordered" evidence="5">
    <location>
        <begin position="47"/>
        <end position="71"/>
    </location>
</feature>
<feature type="region of interest" description="Heparan sulfate N-sulfotransferase 1">
    <location>
        <begin position="595"/>
        <end position="878"/>
    </location>
</feature>
<feature type="active site" description="For sulfotransferase activity" evidence="1">
    <location>
        <position position="610"/>
    </location>
</feature>
<feature type="binding site" evidence="1">
    <location>
        <begin position="610"/>
        <end position="614"/>
    </location>
    <ligand>
        <name>adenosine 3',5'-bisphosphate</name>
        <dbReference type="ChEBI" id="CHEBI:58343"/>
    </ligand>
</feature>
<feature type="binding site" evidence="1">
    <location>
        <position position="708"/>
    </location>
    <ligand>
        <name>adenosine 3',5'-bisphosphate</name>
        <dbReference type="ChEBI" id="CHEBI:58343"/>
    </ligand>
</feature>
<feature type="binding site" evidence="1">
    <location>
        <position position="813"/>
    </location>
    <ligand>
        <name>adenosine 3',5'-bisphosphate</name>
        <dbReference type="ChEBI" id="CHEBI:58343"/>
    </ligand>
</feature>
<feature type="binding site" evidence="1">
    <location>
        <begin position="829"/>
        <end position="833"/>
    </location>
    <ligand>
        <name>adenosine 3',5'-bisphosphate</name>
        <dbReference type="ChEBI" id="CHEBI:58343"/>
    </ligand>
</feature>
<feature type="glycosylation site" description="N-linked (GlcNAc...) asparagine" evidence="4">
    <location>
        <position position="231"/>
    </location>
</feature>
<feature type="glycosylation site" description="N-linked (GlcNAc...) asparagine" evidence="4">
    <location>
        <position position="347"/>
    </location>
</feature>
<feature type="glycosylation site" description="N-linked (GlcNAc...) asparagine" evidence="4">
    <location>
        <position position="397"/>
    </location>
</feature>
<feature type="glycosylation site" description="N-linked (GlcNAc...) asparagine" evidence="4">
    <location>
        <position position="663"/>
    </location>
</feature>
<feature type="disulfide bond" evidence="1">
    <location>
        <begin position="814"/>
        <end position="824"/>
    </location>
</feature>
<proteinExistence type="evidence at transcript level"/>
<sequence length="878" mass="101135">MSLSLKTRRFGRPVRPQLVLLLLFALCLLSVFISAYYLYGWKRGLEPSGSEAQSPDCDEPKISPSRLLPMKPLKPVDSSRTDPLVLVFVESLYSQLGQEIVAILESSRFKYRTEIAPGKGDMPTLTDKDRGRFALIVYENILKYVNLDAWNRELLDKYCVEYGVGIIGFFKANENSLLSAQLKGFPLYLHSNLGLKDCSINPKSPLLYITRPNQVEKGDLPGEDWTVFQSNHSTYEPVLLAKTKSAESIPHLSVDAALHTTVVQDLGLHDGIQRVLFGNNLNFWLHKLVFVDAVSFLTGKRLSLPLNRYVLVDIDDIFVGKEGTRMKVEDVKALYDTQMELRTHIPNFTFNLGFSGKFFHTGTDAEDEGDDLLLSYVKQFWWFPHMWSHMQPHLFHNQSVLAEQMALNRKFAVEHGIPTDMGYAVAPHHSGVYPVHVQLYEAWKQIWGIKVTSTEEYPHLKPARYRRGFVHNGIMVLPRQTCGLFTHTIFYNEYPGGPVELDKIINGGELFLTVLLNPISIFMTHLSNYGNDRLGLYTFKHLVQFLNTWTNLKLETLPPVQLAHKYFQIFPEEKDPLWQDPCEDKRHKDIWSKEKTCDRFPKLLIIGPQKTGTTALYLFLGMHSDLSSNYPSSETFEEIQFFNGQNYHKGIDWFMEFFPIPSNTTSDFYFEKSANYFDSELAPRRVAALLPKAKIITILINPADRAYSWYQHQRAHDDPVAMKYTFQEVITAGPEAPQRLRALQNRCLVPGWYSTHIERWMNHFHANQILVLDGKLLRTEPANVMETVQKFLGVTNAMDYHKTLAFDPKKGFWCQLLDGGRTKCLGKSKGRKYPDMDSDSRSFLMDYYRDHNIELSKLLYKMGQTLPTWLREELQSTR</sequence>
<name>NDST1_XENTR</name>
<keyword id="KW-1015">Disulfide bond</keyword>
<keyword id="KW-0325">Glycoprotein</keyword>
<keyword id="KW-0333">Golgi apparatus</keyword>
<keyword id="KW-0378">Hydrolase</keyword>
<keyword id="KW-0472">Membrane</keyword>
<keyword id="KW-0511">Multifunctional enzyme</keyword>
<keyword id="KW-1185">Reference proteome</keyword>
<keyword id="KW-0735">Signal-anchor</keyword>
<keyword id="KW-0808">Transferase</keyword>
<keyword id="KW-0812">Transmembrane</keyword>
<keyword id="KW-1133">Transmembrane helix</keyword>
<gene>
    <name type="primary">ndst1</name>
</gene>
<evidence type="ECO:0000250" key="1">
    <source>
        <dbReference type="UniProtKB" id="P52848"/>
    </source>
</evidence>
<evidence type="ECO:0000250" key="2">
    <source>
        <dbReference type="UniProtKB" id="Q02353"/>
    </source>
</evidence>
<evidence type="ECO:0000250" key="3">
    <source>
        <dbReference type="UniProtKB" id="Q3UHN9"/>
    </source>
</evidence>
<evidence type="ECO:0000255" key="4"/>
<evidence type="ECO:0000256" key="5">
    <source>
        <dbReference type="SAM" id="MobiDB-lite"/>
    </source>
</evidence>
<evidence type="ECO:0000305" key="6"/>
<comment type="function">
    <text evidence="3">Essential bifunctional enzyme that catalyzes both the N-deacetylation and the N-sulfation of glucosamine (GlcNAc) of the glycosaminoglycan in heparan sulfate. Modifies the GlcNAc-GlcA disaccharide repeating sugar backbone to make N-sulfated heparosan, a prerequisite substrate for later modifications in heparin biosynthesis. Plays a role in determining the extent and pattern of sulfation of heparan sulfate.</text>
</comment>
<comment type="catalytic activity">
    <reaction evidence="3">
        <text>alpha-D-glucosaminyl-[heparan sulfate](n) + 3'-phosphoadenylyl sulfate = N-sulfo-alpha-D-glucosaminyl-[heparan sulfate](n) + adenosine 3',5'-bisphosphate + 2 H(+)</text>
        <dbReference type="Rhea" id="RHEA:21980"/>
        <dbReference type="Rhea" id="RHEA-COMP:9830"/>
        <dbReference type="Rhea" id="RHEA-COMP:14602"/>
        <dbReference type="ChEBI" id="CHEBI:15378"/>
        <dbReference type="ChEBI" id="CHEBI:58339"/>
        <dbReference type="ChEBI" id="CHEBI:58343"/>
        <dbReference type="ChEBI" id="CHEBI:58388"/>
        <dbReference type="ChEBI" id="CHEBI:140572"/>
        <dbReference type="EC" id="2.8.2.8"/>
    </reaction>
    <physiologicalReaction direction="left-to-right" evidence="3">
        <dbReference type="Rhea" id="RHEA:21981"/>
    </physiologicalReaction>
</comment>
<comment type="pathway">
    <text evidence="3">Glycan metabolism; heparan sulfate biosynthesis.</text>
</comment>
<comment type="pathway">
    <text evidence="3">Glycan metabolism; heparin biosynthesis.</text>
</comment>
<comment type="subunit">
    <text evidence="1">Monomer.</text>
</comment>
<comment type="subcellular location">
    <subcellularLocation>
        <location evidence="2">Golgi apparatus membrane</location>
        <topology evidence="4">Single-pass type II membrane protein</topology>
    </subcellularLocation>
    <subcellularLocation>
        <location evidence="1">Golgi apparatus</location>
        <location evidence="1">trans-Golgi network membrane</location>
        <topology evidence="4">Single-pass type II membrane protein</topology>
    </subcellularLocation>
</comment>
<comment type="similarity">
    <text evidence="6">Belongs to the sulfotransferase 1 family. NDST subfamily.</text>
</comment>
<organism>
    <name type="scientific">Xenopus tropicalis</name>
    <name type="common">Western clawed frog</name>
    <name type="synonym">Silurana tropicalis</name>
    <dbReference type="NCBI Taxonomy" id="8364"/>
    <lineage>
        <taxon>Eukaryota</taxon>
        <taxon>Metazoa</taxon>
        <taxon>Chordata</taxon>
        <taxon>Craniata</taxon>
        <taxon>Vertebrata</taxon>
        <taxon>Euteleostomi</taxon>
        <taxon>Amphibia</taxon>
        <taxon>Batrachia</taxon>
        <taxon>Anura</taxon>
        <taxon>Pipoidea</taxon>
        <taxon>Pipidae</taxon>
        <taxon>Xenopodinae</taxon>
        <taxon>Xenopus</taxon>
        <taxon>Silurana</taxon>
    </lineage>
</organism>
<dbReference type="EC" id="3.5.1.-" evidence="3"/>
<dbReference type="EC" id="2.8.2.8" evidence="3"/>
<dbReference type="EMBL" id="BC084915">
    <property type="protein sequence ID" value="AAH84915.1"/>
    <property type="molecule type" value="mRNA"/>
</dbReference>
<dbReference type="RefSeq" id="NP_001011159.1">
    <property type="nucleotide sequence ID" value="NM_001011159.1"/>
</dbReference>
<dbReference type="SMR" id="Q5U4X8"/>
<dbReference type="FunCoup" id="Q5U4X8">
    <property type="interactions" value="1339"/>
</dbReference>
<dbReference type="STRING" id="8364.ENSXETP00000030441"/>
<dbReference type="GlyCosmos" id="Q5U4X8">
    <property type="glycosylation" value="4 sites, No reported glycans"/>
</dbReference>
<dbReference type="PaxDb" id="8364-ENSXETP00000060802"/>
<dbReference type="DNASU" id="496577"/>
<dbReference type="GeneID" id="496577"/>
<dbReference type="KEGG" id="xtr:496577"/>
<dbReference type="AGR" id="Xenbase:XB-GENE-955052"/>
<dbReference type="CTD" id="3340"/>
<dbReference type="Xenbase" id="XB-GENE-955052">
    <property type="gene designation" value="ndst1"/>
</dbReference>
<dbReference type="eggNOG" id="KOG3703">
    <property type="taxonomic scope" value="Eukaryota"/>
</dbReference>
<dbReference type="InParanoid" id="Q5U4X8"/>
<dbReference type="OMA" id="VGPDCDE"/>
<dbReference type="OrthoDB" id="8958249at2759"/>
<dbReference type="UniPathway" id="UPA00756"/>
<dbReference type="UniPathway" id="UPA00862"/>
<dbReference type="Proteomes" id="UP000008143">
    <property type="component" value="Chromosome 3"/>
</dbReference>
<dbReference type="GO" id="GO:0000139">
    <property type="term" value="C:Golgi membrane"/>
    <property type="evidence" value="ECO:0007669"/>
    <property type="project" value="UniProtKB-SubCell"/>
</dbReference>
<dbReference type="GO" id="GO:0032588">
    <property type="term" value="C:trans-Golgi network membrane"/>
    <property type="evidence" value="ECO:0000250"/>
    <property type="project" value="UniProtKB"/>
</dbReference>
<dbReference type="GO" id="GO:0102140">
    <property type="term" value="F:heparan sulfate N-deacetylase activity"/>
    <property type="evidence" value="ECO:0000250"/>
    <property type="project" value="UniProtKB"/>
</dbReference>
<dbReference type="GO" id="GO:0015016">
    <property type="term" value="F:heparan sulfate N-sulfotransferase activity"/>
    <property type="evidence" value="ECO:0000250"/>
    <property type="project" value="UniProtKB"/>
</dbReference>
<dbReference type="GO" id="GO:0015012">
    <property type="term" value="P:heparan sulfate proteoglycan biosynthetic process"/>
    <property type="evidence" value="ECO:0000250"/>
    <property type="project" value="UniProtKB"/>
</dbReference>
<dbReference type="GO" id="GO:0030210">
    <property type="term" value="P:heparin proteoglycan biosynthetic process"/>
    <property type="evidence" value="ECO:0007669"/>
    <property type="project" value="UniProtKB-UniPathway"/>
</dbReference>
<dbReference type="FunFam" id="3.40.50.300:FF:000176">
    <property type="entry name" value="bifunctional heparan sulfate N-deacetylase/N-sulfotransferase 1"/>
    <property type="match status" value="1"/>
</dbReference>
<dbReference type="Gene3D" id="3.40.50.300">
    <property type="entry name" value="P-loop containing nucleotide triphosphate hydrolases"/>
    <property type="match status" value="1"/>
</dbReference>
<dbReference type="InterPro" id="IPR021930">
    <property type="entry name" value="Heparan_SO4_deacetylase_dom"/>
</dbReference>
<dbReference type="InterPro" id="IPR056793">
    <property type="entry name" value="HSNSD_N"/>
</dbReference>
<dbReference type="InterPro" id="IPR037359">
    <property type="entry name" value="NST/OST"/>
</dbReference>
<dbReference type="InterPro" id="IPR027417">
    <property type="entry name" value="P-loop_NTPase"/>
</dbReference>
<dbReference type="InterPro" id="IPR000863">
    <property type="entry name" value="Sulfotransferase_dom"/>
</dbReference>
<dbReference type="PANTHER" id="PTHR10605:SF30">
    <property type="entry name" value="BIFUNCTIONAL HEPARAN SULFATE N-DEACETYLASE_N-SULFOTRANSFERASE 1"/>
    <property type="match status" value="1"/>
</dbReference>
<dbReference type="PANTHER" id="PTHR10605">
    <property type="entry name" value="HEPARAN SULFATE SULFOTRANSFERASE"/>
    <property type="match status" value="1"/>
</dbReference>
<dbReference type="Pfam" id="PF12062">
    <property type="entry name" value="HSNSD-CE"/>
    <property type="match status" value="1"/>
</dbReference>
<dbReference type="Pfam" id="PF25119">
    <property type="entry name" value="HSNSD_N"/>
    <property type="match status" value="1"/>
</dbReference>
<dbReference type="Pfam" id="PF00685">
    <property type="entry name" value="Sulfotransfer_1"/>
    <property type="match status" value="1"/>
</dbReference>
<dbReference type="SUPFAM" id="SSF52540">
    <property type="entry name" value="P-loop containing nucleoside triphosphate hydrolases"/>
    <property type="match status" value="1"/>
</dbReference>
<protein>
    <recommendedName>
        <fullName evidence="3">Bifunctional heparan sulfate N-deacetylase/N-sulfotransferase 1</fullName>
    </recommendedName>
    <alternativeName>
        <fullName>Glucosaminyl N-deacetylase/N-sulfotransferase 1</fullName>
        <shortName>NDST-1</shortName>
    </alternativeName>
    <domain>
        <recommendedName>
            <fullName evidence="3">Heparan sulfate N-deacetylase 1</fullName>
            <ecNumber evidence="3">3.5.1.-</ecNumber>
        </recommendedName>
    </domain>
    <domain>
        <recommendedName>
            <fullName evidence="3">Heparan sulfate N-sulfotransferase 1</fullName>
            <ecNumber evidence="3">2.8.2.8</ecNumber>
        </recommendedName>
    </domain>
</protein>
<accession>Q5U4X8</accession>